<evidence type="ECO:0000250" key="1"/>
<evidence type="ECO:0000250" key="2">
    <source>
        <dbReference type="UniProtKB" id="O18979"/>
    </source>
</evidence>
<evidence type="ECO:0000255" key="3"/>
<evidence type="ECO:0000256" key="4">
    <source>
        <dbReference type="SAM" id="MobiDB-lite"/>
    </source>
</evidence>
<evidence type="ECO:0000269" key="5">
    <source>
    </source>
</evidence>
<evidence type="ECO:0000269" key="6">
    <source ref="2"/>
</evidence>
<evidence type="ECO:0000303" key="7">
    <source>
    </source>
</evidence>
<evidence type="ECO:0000305" key="8"/>
<evidence type="ECO:0000312" key="9">
    <source>
        <dbReference type="EMBL" id="AAD11801.1"/>
    </source>
</evidence>
<evidence type="ECO:0000312" key="10">
    <source>
        <dbReference type="EMBL" id="AAF63227.1"/>
    </source>
</evidence>
<evidence type="ECO:0000312" key="11">
    <source>
        <dbReference type="RGD" id="2716"/>
    </source>
</evidence>
<sequence>MDRRSRAHQWRRARHNYNDLCPPIGRRAATALLWLSCSIALLRALASSNARAQQRAAQRRSFLNAHHRSAAAAAAAQVLPESSESESDHEHEEAEPELARPECLEYDQDDYETETDSETEPESDIQSETEFETEPETEPETAPTTEPETEPEDERGPRGATFNQSLTQRLHALKLQSADASPRRAQPTTQEPESASEGEEPQREPLDEDPRDPEESEERREANRQPRRCKTRRPARRRDQSPESPPRKGPIPIRRH</sequence>
<protein>
    <recommendedName>
        <fullName>Neuroendocrine secretory protein 55</fullName>
        <shortName>NESP55</shortName>
    </recommendedName>
    <component>
        <recommendedName>
            <fullName>LHAL tetrapeptide</fullName>
        </recommendedName>
    </component>
    <component>
        <recommendedName>
            <fullName>GPIPIRRH peptide</fullName>
        </recommendedName>
    </component>
</protein>
<organism>
    <name type="scientific">Rattus norvegicus</name>
    <name type="common">Rat</name>
    <dbReference type="NCBI Taxonomy" id="10116"/>
    <lineage>
        <taxon>Eukaryota</taxon>
        <taxon>Metazoa</taxon>
        <taxon>Chordata</taxon>
        <taxon>Craniata</taxon>
        <taxon>Vertebrata</taxon>
        <taxon>Euteleostomi</taxon>
        <taxon>Mammalia</taxon>
        <taxon>Eutheria</taxon>
        <taxon>Euarchontoglires</taxon>
        <taxon>Glires</taxon>
        <taxon>Rodentia</taxon>
        <taxon>Myomorpha</taxon>
        <taxon>Muroidea</taxon>
        <taxon>Muridae</taxon>
        <taxon>Murinae</taxon>
        <taxon>Rattus</taxon>
    </lineage>
</organism>
<proteinExistence type="evidence at transcript level"/>
<name>GNAS3_RAT</name>
<comment type="subcellular location">
    <subcellularLocation>
        <location evidence="1">Cytoplasmic vesicle</location>
        <location evidence="1">Secretory vesicle</location>
        <location evidence="1">Synaptic vesicle</location>
    </subcellularLocation>
    <subcellularLocation>
        <location evidence="1">Secreted</location>
    </subcellularLocation>
    <text evidence="1">Neuroendocrine secretory granules.</text>
</comment>
<comment type="alternative products">
    <event type="alternative splicing"/>
    <isoform>
        <id>Q792G6-1</id>
        <name evidence="5 6">Nesp55</name>
        <sequence type="displayed"/>
    </isoform>
    <isoform>
        <id>Q63803-1</id>
        <name>XLas-1</name>
        <sequence type="external"/>
    </isoform>
    <isoform>
        <id>P63095-1</id>
        <name evidence="8">Gnas-1</name>
        <sequence type="external"/>
    </isoform>
    <isoform>
        <id>P63095-2</id>
        <name evidence="8">Gnas-2</name>
        <sequence type="external"/>
    </isoform>
    <isoform>
        <id>P63095-3</id>
        <name evidence="8">Gnas-3</name>
        <name evidence="8">GsaN1</name>
        <sequence type="external"/>
    </isoform>
</comment>
<comment type="PTM">
    <text evidence="2">Binds keratan sulfate chains.</text>
</comment>
<comment type="PTM">
    <text evidence="5">May be proteolytically processed to give rise to a number of active peptides.</text>
</comment>
<comment type="miscellaneous">
    <text>The GNAS locus is imprinted in a complex manner, giving rise to distinct paternally, maternally and biallelically expressed proteins. The XLas isoforms are paternally derived, the Gnas isoforms are biallelically derived and the Nesp55 isoforms are maternally derived.</text>
</comment>
<comment type="miscellaneous">
    <molecule>Isoform Nesp55</molecule>
    <text>Shares no sequence similarity with other isoforms due to a novel first exon containing the entire reading frame spliced to shared exon 2 so that exons 2-13 make up the 3'-UTR.</text>
</comment>
<comment type="similarity">
    <text evidence="3">Belongs to the NESP55 family.</text>
</comment>
<keyword id="KW-0025">Alternative splicing</keyword>
<keyword id="KW-0165">Cleavage on pair of basic residues</keyword>
<keyword id="KW-0968">Cytoplasmic vesicle</keyword>
<keyword id="KW-0325">Glycoprotein</keyword>
<keyword id="KW-0654">Proteoglycan</keyword>
<keyword id="KW-1185">Reference proteome</keyword>
<keyword id="KW-0964">Secreted</keyword>
<keyword id="KW-0732">Signal</keyword>
<keyword id="KW-0770">Synapse</keyword>
<gene>
    <name evidence="11" type="primary">Gnas</name>
    <name evidence="11" type="synonym">Gnas1</name>
</gene>
<feature type="signal peptide" evidence="1">
    <location>
        <begin position="1"/>
        <end position="46"/>
    </location>
</feature>
<feature type="chain" id="PRO_0000253973" description="Neuroendocrine secretory protein 55">
    <location>
        <begin position="47"/>
        <end position="256"/>
    </location>
</feature>
<feature type="peptide" id="PRO_0000253974" description="LHAL tetrapeptide" evidence="3 7">
    <location>
        <begin position="170"/>
        <end position="173"/>
    </location>
</feature>
<feature type="peptide" id="PRO_0000253975" description="GPIPIRRH peptide" evidence="3 7">
    <location>
        <begin position="249"/>
        <end position="256"/>
    </location>
</feature>
<feature type="region of interest" description="Disordered" evidence="4">
    <location>
        <begin position="61"/>
        <end position="256"/>
    </location>
</feature>
<feature type="compositionally biased region" description="Basic and acidic residues" evidence="4">
    <location>
        <begin position="86"/>
        <end position="103"/>
    </location>
</feature>
<feature type="compositionally biased region" description="Acidic residues" evidence="4">
    <location>
        <begin position="104"/>
        <end position="139"/>
    </location>
</feature>
<feature type="compositionally biased region" description="Acidic residues" evidence="4">
    <location>
        <begin position="206"/>
        <end position="216"/>
    </location>
</feature>
<feature type="compositionally biased region" description="Basic residues" evidence="4">
    <location>
        <begin position="225"/>
        <end position="236"/>
    </location>
</feature>
<accession>Q792G6</accession>
<reference evidence="10" key="1">
    <citation type="journal article" date="2000" name="Neuroendocrinology">
        <title>Neuroendocrine secretory protein 55 (NESP55): alternative splicing onto transcripts of the GNAS gene and posttranslational processing of a maternally expressed protein.</title>
        <authorList>
            <person name="Weiss U."/>
            <person name="Ischia R."/>
            <person name="Eder S."/>
            <person name="Lovisetti-Scamihorn P."/>
            <person name="Bauer R."/>
            <person name="Fischer-Colbrie R."/>
        </authorList>
    </citation>
    <scope>NUCLEOTIDE SEQUENCE [MRNA]</scope>
</reference>
<reference evidence="9" key="2">
    <citation type="submission" date="1998-11" db="EMBL/GenBank/DDBJ databases">
        <title>Molecular characterization of XL2, a neuroendocrine-specific luminal Golgi-resident protein.</title>
        <authorList>
            <person name="Wang Y.Z."/>
            <person name="Kehlenbach R.H."/>
            <person name="Huttner W.B."/>
        </authorList>
    </citation>
    <scope>NUCLEOTIDE SEQUENCE [MRNA]</scope>
    <source>
        <strain evidence="9">New England Deaconess Hospital</strain>
    </source>
</reference>
<dbReference type="EMBL" id="AF105254">
    <property type="protein sequence ID" value="AAF63227.1"/>
    <property type="molecule type" value="mRNA"/>
</dbReference>
<dbReference type="EMBL" id="AF107844">
    <property type="protein sequence ID" value="AAD11801.1"/>
    <property type="molecule type" value="mRNA"/>
</dbReference>
<dbReference type="EMBL" id="AF107845">
    <property type="protein sequence ID" value="AAD11803.1"/>
    <property type="molecule type" value="mRNA"/>
</dbReference>
<dbReference type="RefSeq" id="NP_001153125.1">
    <property type="nucleotide sequence ID" value="NM_001159653.1"/>
</dbReference>
<dbReference type="RefSeq" id="NP_001153128.1">
    <property type="nucleotide sequence ID" value="NM_001159656.1"/>
</dbReference>
<dbReference type="BioGRID" id="247005">
    <property type="interactions" value="8"/>
</dbReference>
<dbReference type="STRING" id="10116.ENSRNOP00000033065"/>
<dbReference type="PaxDb" id="10116-ENSRNOP00000033065"/>
<dbReference type="GeneID" id="24896"/>
<dbReference type="KEGG" id="rno:24896"/>
<dbReference type="UCSC" id="RGD:2716">
    <molecule id="Q792G6-1"/>
    <property type="organism name" value="rat"/>
</dbReference>
<dbReference type="AGR" id="RGD:2716"/>
<dbReference type="CTD" id="2778"/>
<dbReference type="RGD" id="2716">
    <property type="gene designation" value="Gnas"/>
</dbReference>
<dbReference type="eggNOG" id="ENOG502RNKH">
    <property type="taxonomic scope" value="Eukaryota"/>
</dbReference>
<dbReference type="OrthoDB" id="9837901at2759"/>
<dbReference type="PhylomeDB" id="Q792G6"/>
<dbReference type="Proteomes" id="UP000002494">
    <property type="component" value="Unplaced"/>
</dbReference>
<dbReference type="GO" id="GO:0030142">
    <property type="term" value="C:COPI-coated Golgi to ER transport vesicle"/>
    <property type="evidence" value="ECO:0000314"/>
    <property type="project" value="RGD"/>
</dbReference>
<dbReference type="GO" id="GO:0005737">
    <property type="term" value="C:cytoplasm"/>
    <property type="evidence" value="ECO:0000266"/>
    <property type="project" value="RGD"/>
</dbReference>
<dbReference type="GO" id="GO:0005829">
    <property type="term" value="C:cytosol"/>
    <property type="evidence" value="ECO:0000266"/>
    <property type="project" value="RGD"/>
</dbReference>
<dbReference type="GO" id="GO:0030425">
    <property type="term" value="C:dendrite"/>
    <property type="evidence" value="ECO:0000266"/>
    <property type="project" value="RGD"/>
</dbReference>
<dbReference type="GO" id="GO:0005768">
    <property type="term" value="C:endosome"/>
    <property type="evidence" value="ECO:0000314"/>
    <property type="project" value="RGD"/>
</dbReference>
<dbReference type="GO" id="GO:0005576">
    <property type="term" value="C:extracellular region"/>
    <property type="evidence" value="ECO:0007669"/>
    <property type="project" value="UniProtKB-SubCell"/>
</dbReference>
<dbReference type="GO" id="GO:0005834">
    <property type="term" value="C:heterotrimeric G-protein complex"/>
    <property type="evidence" value="ECO:0000314"/>
    <property type="project" value="RGD"/>
</dbReference>
<dbReference type="GO" id="GO:0016020">
    <property type="term" value="C:membrane"/>
    <property type="evidence" value="ECO:0000266"/>
    <property type="project" value="RGD"/>
</dbReference>
<dbReference type="GO" id="GO:0043025">
    <property type="term" value="C:neuronal cell body"/>
    <property type="evidence" value="ECO:0000314"/>
    <property type="project" value="RGD"/>
</dbReference>
<dbReference type="GO" id="GO:0005634">
    <property type="term" value="C:nucleus"/>
    <property type="evidence" value="ECO:0000266"/>
    <property type="project" value="RGD"/>
</dbReference>
<dbReference type="GO" id="GO:0048471">
    <property type="term" value="C:perinuclear region of cytoplasm"/>
    <property type="evidence" value="ECO:0000314"/>
    <property type="project" value="RGD"/>
</dbReference>
<dbReference type="GO" id="GO:0005886">
    <property type="term" value="C:plasma membrane"/>
    <property type="evidence" value="ECO:0000266"/>
    <property type="project" value="RGD"/>
</dbReference>
<dbReference type="GO" id="GO:0055037">
    <property type="term" value="C:recycling endosome"/>
    <property type="evidence" value="ECO:0000314"/>
    <property type="project" value="RGD"/>
</dbReference>
<dbReference type="GO" id="GO:0001726">
    <property type="term" value="C:ruffle"/>
    <property type="evidence" value="ECO:0000314"/>
    <property type="project" value="RGD"/>
</dbReference>
<dbReference type="GO" id="GO:0042383">
    <property type="term" value="C:sarcolemma"/>
    <property type="evidence" value="ECO:0000314"/>
    <property type="project" value="RGD"/>
</dbReference>
<dbReference type="GO" id="GO:0008021">
    <property type="term" value="C:synaptic vesicle"/>
    <property type="evidence" value="ECO:0007669"/>
    <property type="project" value="UniProtKB-SubCell"/>
</dbReference>
<dbReference type="GO" id="GO:0032588">
    <property type="term" value="C:trans-Golgi network membrane"/>
    <property type="evidence" value="ECO:0000266"/>
    <property type="project" value="RGD"/>
</dbReference>
<dbReference type="GO" id="GO:0010856">
    <property type="term" value="F:adenylate cyclase activator activity"/>
    <property type="evidence" value="ECO:0000266"/>
    <property type="project" value="RGD"/>
</dbReference>
<dbReference type="GO" id="GO:0010854">
    <property type="term" value="F:adenylate cyclase regulator activity"/>
    <property type="evidence" value="ECO:0000266"/>
    <property type="project" value="RGD"/>
</dbReference>
<dbReference type="GO" id="GO:0043014">
    <property type="term" value="F:alpha-tubulin binding"/>
    <property type="evidence" value="ECO:0000314"/>
    <property type="project" value="RGD"/>
</dbReference>
<dbReference type="GO" id="GO:0031698">
    <property type="term" value="F:beta-2 adrenergic receptor binding"/>
    <property type="evidence" value="ECO:0000353"/>
    <property type="project" value="RGD"/>
</dbReference>
<dbReference type="GO" id="GO:0051430">
    <property type="term" value="F:corticotropin-releasing hormone receptor 1 binding"/>
    <property type="evidence" value="ECO:0000353"/>
    <property type="project" value="RGD"/>
</dbReference>
<dbReference type="GO" id="GO:0031748">
    <property type="term" value="F:D1 dopamine receptor binding"/>
    <property type="evidence" value="ECO:0000353"/>
    <property type="project" value="RGD"/>
</dbReference>
<dbReference type="GO" id="GO:0003925">
    <property type="term" value="F:G protein activity"/>
    <property type="evidence" value="ECO:0000266"/>
    <property type="project" value="RGD"/>
</dbReference>
<dbReference type="GO" id="GO:0001965">
    <property type="term" value="F:G-protein alpha-subunit binding"/>
    <property type="evidence" value="ECO:0000353"/>
    <property type="project" value="RGD"/>
</dbReference>
<dbReference type="GO" id="GO:0031681">
    <property type="term" value="F:G-protein beta-subunit binding"/>
    <property type="evidence" value="ECO:0000314"/>
    <property type="project" value="RGD"/>
</dbReference>
<dbReference type="GO" id="GO:0031683">
    <property type="term" value="F:G-protein beta/gamma-subunit complex binding"/>
    <property type="evidence" value="ECO:0000318"/>
    <property type="project" value="GO_Central"/>
</dbReference>
<dbReference type="GO" id="GO:0005525">
    <property type="term" value="F:GTP binding"/>
    <property type="evidence" value="ECO:0000314"/>
    <property type="project" value="RGD"/>
</dbReference>
<dbReference type="GO" id="GO:0003924">
    <property type="term" value="F:GTPase activity"/>
    <property type="evidence" value="ECO:0000318"/>
    <property type="project" value="GO_Central"/>
</dbReference>
<dbReference type="GO" id="GO:0005159">
    <property type="term" value="F:insulin-like growth factor receptor binding"/>
    <property type="evidence" value="ECO:0000353"/>
    <property type="project" value="RGD"/>
</dbReference>
<dbReference type="GO" id="GO:0035255">
    <property type="term" value="F:ionotropic glutamate receptor binding"/>
    <property type="evidence" value="ECO:0000353"/>
    <property type="project" value="RGD"/>
</dbReference>
<dbReference type="GO" id="GO:0031852">
    <property type="term" value="F:mu-type opioid receptor binding"/>
    <property type="evidence" value="ECO:0000314"/>
    <property type="project" value="RGD"/>
</dbReference>
<dbReference type="GO" id="GO:0019904">
    <property type="term" value="F:protein domain specific binding"/>
    <property type="evidence" value="ECO:0000353"/>
    <property type="project" value="RGD"/>
</dbReference>
<dbReference type="GO" id="GO:0071880">
    <property type="term" value="P:adenylate cyclase-activating adrenergic receptor signaling pathway"/>
    <property type="evidence" value="ECO:0000266"/>
    <property type="project" value="RGD"/>
</dbReference>
<dbReference type="GO" id="GO:0007191">
    <property type="term" value="P:adenylate cyclase-activating dopamine receptor signaling pathway"/>
    <property type="evidence" value="ECO:0000266"/>
    <property type="project" value="RGD"/>
</dbReference>
<dbReference type="GO" id="GO:0007189">
    <property type="term" value="P:adenylate cyclase-activating G protein-coupled receptor signaling pathway"/>
    <property type="evidence" value="ECO:0000314"/>
    <property type="project" value="RGD"/>
</dbReference>
<dbReference type="GO" id="GO:0007192">
    <property type="term" value="P:adenylate cyclase-activating serotonin receptor signaling pathway"/>
    <property type="evidence" value="ECO:0000266"/>
    <property type="project" value="RGD"/>
</dbReference>
<dbReference type="GO" id="GO:0060348">
    <property type="term" value="P:bone development"/>
    <property type="evidence" value="ECO:0000266"/>
    <property type="project" value="RGD"/>
</dbReference>
<dbReference type="GO" id="GO:0051216">
    <property type="term" value="P:cartilage development"/>
    <property type="evidence" value="ECO:0000266"/>
    <property type="project" value="RGD"/>
</dbReference>
<dbReference type="GO" id="GO:0071377">
    <property type="term" value="P:cellular response to glucagon stimulus"/>
    <property type="evidence" value="ECO:0000266"/>
    <property type="project" value="RGD"/>
</dbReference>
<dbReference type="GO" id="GO:0050890">
    <property type="term" value="P:cognition"/>
    <property type="evidence" value="ECO:0000266"/>
    <property type="project" value="RGD"/>
</dbReference>
<dbReference type="GO" id="GO:0048589">
    <property type="term" value="P:developmental growth"/>
    <property type="evidence" value="ECO:0000266"/>
    <property type="project" value="RGD"/>
</dbReference>
<dbReference type="GO" id="GO:0048701">
    <property type="term" value="P:embryonic cranial skeleton morphogenesis"/>
    <property type="evidence" value="ECO:0000266"/>
    <property type="project" value="RGD"/>
</dbReference>
<dbReference type="GO" id="GO:0035116">
    <property type="term" value="P:embryonic hindlimb morphogenesis"/>
    <property type="evidence" value="ECO:0000266"/>
    <property type="project" value="RGD"/>
</dbReference>
<dbReference type="GO" id="GO:0001958">
    <property type="term" value="P:endochondral ossification"/>
    <property type="evidence" value="ECO:0000266"/>
    <property type="project" value="RGD"/>
</dbReference>
<dbReference type="GO" id="GO:0006112">
    <property type="term" value="P:energy reserve metabolic process"/>
    <property type="evidence" value="ECO:0000266"/>
    <property type="project" value="RGD"/>
</dbReference>
<dbReference type="GO" id="GO:0007186">
    <property type="term" value="P:G protein-coupled receptor signaling pathway"/>
    <property type="evidence" value="ECO:0000315"/>
    <property type="project" value="RGD"/>
</dbReference>
<dbReference type="GO" id="GO:0071514">
    <property type="term" value="P:genomic imprinting"/>
    <property type="evidence" value="ECO:0000266"/>
    <property type="project" value="RGD"/>
</dbReference>
<dbReference type="GO" id="GO:0060789">
    <property type="term" value="P:hair follicle placode formation"/>
    <property type="evidence" value="ECO:0000266"/>
    <property type="project" value="RGD"/>
</dbReference>
<dbReference type="GO" id="GO:0035264">
    <property type="term" value="P:multicellular organism growth"/>
    <property type="evidence" value="ECO:0000266"/>
    <property type="project" value="RGD"/>
</dbReference>
<dbReference type="GO" id="GO:0045776">
    <property type="term" value="P:negative regulation of blood pressure"/>
    <property type="evidence" value="ECO:0000315"/>
    <property type="project" value="RGD"/>
</dbReference>
<dbReference type="GO" id="GO:0070527">
    <property type="term" value="P:platelet aggregation"/>
    <property type="evidence" value="ECO:0000266"/>
    <property type="project" value="RGD"/>
</dbReference>
<dbReference type="GO" id="GO:0008284">
    <property type="term" value="P:positive regulation of cell population proliferation"/>
    <property type="evidence" value="ECO:0000314"/>
    <property type="project" value="RGD"/>
</dbReference>
<dbReference type="GO" id="GO:0120162">
    <property type="term" value="P:positive regulation of cold-induced thermogenesis"/>
    <property type="evidence" value="ECO:0000250"/>
    <property type="project" value="YuBioLab"/>
</dbReference>
<dbReference type="GO" id="GO:0032024">
    <property type="term" value="P:positive regulation of insulin secretion"/>
    <property type="evidence" value="ECO:0000266"/>
    <property type="project" value="RGD"/>
</dbReference>
<dbReference type="GO" id="GO:0045669">
    <property type="term" value="P:positive regulation of osteoblast differentiation"/>
    <property type="evidence" value="ECO:0000266"/>
    <property type="project" value="RGD"/>
</dbReference>
<dbReference type="GO" id="GO:0045672">
    <property type="term" value="P:positive regulation of osteoclast differentiation"/>
    <property type="evidence" value="ECO:0000266"/>
    <property type="project" value="RGD"/>
</dbReference>
<dbReference type="GO" id="GO:0010765">
    <property type="term" value="P:positive regulation of sodium ion transport"/>
    <property type="evidence" value="ECO:0000315"/>
    <property type="project" value="RGD"/>
</dbReference>
<dbReference type="GO" id="GO:0040032">
    <property type="term" value="P:post-embryonic body morphogenesis"/>
    <property type="evidence" value="ECO:0000266"/>
    <property type="project" value="RGD"/>
</dbReference>
<dbReference type="GO" id="GO:0009791">
    <property type="term" value="P:post-embryonic development"/>
    <property type="evidence" value="ECO:0000266"/>
    <property type="project" value="RGD"/>
</dbReference>
<dbReference type="GO" id="GO:2000828">
    <property type="term" value="P:regulation of parathyroid hormone secretion"/>
    <property type="evidence" value="ECO:0000266"/>
    <property type="project" value="RGD"/>
</dbReference>
<dbReference type="GO" id="GO:0009966">
    <property type="term" value="P:regulation of signal transduction"/>
    <property type="evidence" value="ECO:0000266"/>
    <property type="project" value="RGD"/>
</dbReference>
<dbReference type="GO" id="GO:0006357">
    <property type="term" value="P:regulation of transcription by RNA polymerase II"/>
    <property type="evidence" value="ECO:0000315"/>
    <property type="project" value="RGD"/>
</dbReference>
<dbReference type="GO" id="GO:0071107">
    <property type="term" value="P:response to parathyroid hormone"/>
    <property type="evidence" value="ECO:0000266"/>
    <property type="project" value="RGD"/>
</dbReference>
<dbReference type="GO" id="GO:0034695">
    <property type="term" value="P:response to prostaglandin E"/>
    <property type="evidence" value="ECO:0000266"/>
    <property type="project" value="RGD"/>
</dbReference>
<dbReference type="GO" id="GO:0009410">
    <property type="term" value="P:response to xenobiotic stimulus"/>
    <property type="evidence" value="ECO:0000266"/>
    <property type="project" value="RGD"/>
</dbReference>
<dbReference type="GO" id="GO:0007606">
    <property type="term" value="P:sensory perception of chemical stimulus"/>
    <property type="evidence" value="ECO:0000318"/>
    <property type="project" value="GO_Central"/>
</dbReference>
<dbReference type="GO" id="GO:0001501">
    <property type="term" value="P:skeletal system development"/>
    <property type="evidence" value="ECO:0000266"/>
    <property type="project" value="RGD"/>
</dbReference>
<dbReference type="GO" id="GO:0043588">
    <property type="term" value="P:skin development"/>
    <property type="evidence" value="ECO:0000266"/>
    <property type="project" value="RGD"/>
</dbReference>
<dbReference type="GO" id="GO:0001894">
    <property type="term" value="P:tissue homeostasis"/>
    <property type="evidence" value="ECO:0000266"/>
    <property type="project" value="RGD"/>
</dbReference>
<dbReference type="InterPro" id="IPR009434">
    <property type="entry name" value="NESP55"/>
</dbReference>
<dbReference type="Pfam" id="PF06390">
    <property type="entry name" value="NESP55"/>
    <property type="match status" value="1"/>
</dbReference>